<reference key="1">
    <citation type="journal article" date="2005" name="Nat. Biotechnol.">
        <title>Complete genome sequence of the acetic acid bacterium Gluconobacter oxydans.</title>
        <authorList>
            <person name="Prust C."/>
            <person name="Hoffmeister M."/>
            <person name="Liesegang H."/>
            <person name="Wiezer A."/>
            <person name="Fricke W.F."/>
            <person name="Ehrenreich A."/>
            <person name="Gottschalk G."/>
            <person name="Deppenmeier U."/>
        </authorList>
    </citation>
    <scope>NUCLEOTIDE SEQUENCE [LARGE SCALE GENOMIC DNA]</scope>
    <source>
        <strain>621H</strain>
    </source>
</reference>
<comment type="subunit">
    <text evidence="1">Forms oligomers.</text>
</comment>
<comment type="subcellular location">
    <subcellularLocation>
        <location evidence="1">Cytoplasm</location>
        <location evidence="1">Nucleoid</location>
    </subcellularLocation>
</comment>
<comment type="similarity">
    <text evidence="1">Belongs to the MraZ family.</text>
</comment>
<feature type="chain" id="PRO_0000108486" description="Transcriptional regulator MraZ">
    <location>
        <begin position="1"/>
        <end position="164"/>
    </location>
</feature>
<feature type="domain" description="SpoVT-AbrB 1" evidence="2">
    <location>
        <begin position="7"/>
        <end position="57"/>
    </location>
</feature>
<feature type="domain" description="SpoVT-AbrB 2" evidence="2">
    <location>
        <begin position="86"/>
        <end position="129"/>
    </location>
</feature>
<feature type="region of interest" description="Disordered" evidence="3">
    <location>
        <begin position="133"/>
        <end position="164"/>
    </location>
</feature>
<feature type="compositionally biased region" description="Low complexity" evidence="3">
    <location>
        <begin position="142"/>
        <end position="164"/>
    </location>
</feature>
<protein>
    <recommendedName>
        <fullName>Transcriptional regulator MraZ</fullName>
    </recommendedName>
</protein>
<keyword id="KW-0963">Cytoplasm</keyword>
<keyword id="KW-0238">DNA-binding</keyword>
<keyword id="KW-1185">Reference proteome</keyword>
<keyword id="KW-0677">Repeat</keyword>
<keyword id="KW-0804">Transcription</keyword>
<keyword id="KW-0805">Transcription regulation</keyword>
<gene>
    <name evidence="1" type="primary">mraZ</name>
    <name type="ordered locus">GOX0149</name>
</gene>
<sequence>MSMFLGTHQNRFDAKGRVSIPASFRAALKSQAQPGDPLVILRPSHLHPCIEGWTVGAFASLATPLDEYDPFSEDHEDLAASLYADAYPLDSDKEGRIILPENLRTHAALTDEVSFMGLGRTFQIWNPEAAAERRQAARSRARTLATSRRPASAPAAGNTAGAAE</sequence>
<organism>
    <name type="scientific">Gluconobacter oxydans (strain 621H)</name>
    <name type="common">Gluconobacter suboxydans</name>
    <dbReference type="NCBI Taxonomy" id="290633"/>
    <lineage>
        <taxon>Bacteria</taxon>
        <taxon>Pseudomonadati</taxon>
        <taxon>Pseudomonadota</taxon>
        <taxon>Alphaproteobacteria</taxon>
        <taxon>Acetobacterales</taxon>
        <taxon>Acetobacteraceae</taxon>
        <taxon>Gluconobacter</taxon>
    </lineage>
</organism>
<name>MRAZ_GLUOX</name>
<accession>Q5FUK4</accession>
<evidence type="ECO:0000255" key="1">
    <source>
        <dbReference type="HAMAP-Rule" id="MF_01008"/>
    </source>
</evidence>
<evidence type="ECO:0000255" key="2">
    <source>
        <dbReference type="PROSITE-ProRule" id="PRU01076"/>
    </source>
</evidence>
<evidence type="ECO:0000256" key="3">
    <source>
        <dbReference type="SAM" id="MobiDB-lite"/>
    </source>
</evidence>
<proteinExistence type="inferred from homology"/>
<dbReference type="EMBL" id="CP000009">
    <property type="protein sequence ID" value="AAW59942.1"/>
    <property type="molecule type" value="Genomic_DNA"/>
</dbReference>
<dbReference type="RefSeq" id="WP_011251745.1">
    <property type="nucleotide sequence ID" value="NZ_LT900338.1"/>
</dbReference>
<dbReference type="SMR" id="Q5FUK4"/>
<dbReference type="STRING" id="290633.GOX0149"/>
<dbReference type="GeneID" id="56904420"/>
<dbReference type="KEGG" id="gox:GOX0149"/>
<dbReference type="eggNOG" id="COG2001">
    <property type="taxonomic scope" value="Bacteria"/>
</dbReference>
<dbReference type="HOGENOM" id="CLU_107907_1_0_5"/>
<dbReference type="Proteomes" id="UP000006375">
    <property type="component" value="Chromosome"/>
</dbReference>
<dbReference type="GO" id="GO:0005737">
    <property type="term" value="C:cytoplasm"/>
    <property type="evidence" value="ECO:0007669"/>
    <property type="project" value="UniProtKB-UniRule"/>
</dbReference>
<dbReference type="GO" id="GO:0009295">
    <property type="term" value="C:nucleoid"/>
    <property type="evidence" value="ECO:0007669"/>
    <property type="project" value="UniProtKB-SubCell"/>
</dbReference>
<dbReference type="GO" id="GO:0003700">
    <property type="term" value="F:DNA-binding transcription factor activity"/>
    <property type="evidence" value="ECO:0007669"/>
    <property type="project" value="UniProtKB-UniRule"/>
</dbReference>
<dbReference type="GO" id="GO:0000976">
    <property type="term" value="F:transcription cis-regulatory region binding"/>
    <property type="evidence" value="ECO:0007669"/>
    <property type="project" value="TreeGrafter"/>
</dbReference>
<dbReference type="GO" id="GO:2000143">
    <property type="term" value="P:negative regulation of DNA-templated transcription initiation"/>
    <property type="evidence" value="ECO:0007669"/>
    <property type="project" value="TreeGrafter"/>
</dbReference>
<dbReference type="CDD" id="cd16321">
    <property type="entry name" value="MraZ_C"/>
    <property type="match status" value="1"/>
</dbReference>
<dbReference type="CDD" id="cd16320">
    <property type="entry name" value="MraZ_N"/>
    <property type="match status" value="1"/>
</dbReference>
<dbReference type="Gene3D" id="3.40.1550.20">
    <property type="entry name" value="Transcriptional regulator MraZ domain"/>
    <property type="match status" value="1"/>
</dbReference>
<dbReference type="HAMAP" id="MF_01008">
    <property type="entry name" value="MraZ"/>
    <property type="match status" value="1"/>
</dbReference>
<dbReference type="InterPro" id="IPR003444">
    <property type="entry name" value="MraZ"/>
</dbReference>
<dbReference type="InterPro" id="IPR035644">
    <property type="entry name" value="MraZ_C"/>
</dbReference>
<dbReference type="InterPro" id="IPR020603">
    <property type="entry name" value="MraZ_dom"/>
</dbReference>
<dbReference type="InterPro" id="IPR035642">
    <property type="entry name" value="MraZ_N"/>
</dbReference>
<dbReference type="InterPro" id="IPR038619">
    <property type="entry name" value="MraZ_sf"/>
</dbReference>
<dbReference type="InterPro" id="IPR007159">
    <property type="entry name" value="SpoVT-AbrB_dom"/>
</dbReference>
<dbReference type="InterPro" id="IPR037914">
    <property type="entry name" value="SpoVT-AbrB_sf"/>
</dbReference>
<dbReference type="NCBIfam" id="NF001477">
    <property type="entry name" value="PRK00326.2-4"/>
    <property type="match status" value="1"/>
</dbReference>
<dbReference type="PANTHER" id="PTHR34701">
    <property type="entry name" value="TRANSCRIPTIONAL REGULATOR MRAZ"/>
    <property type="match status" value="1"/>
</dbReference>
<dbReference type="PANTHER" id="PTHR34701:SF1">
    <property type="entry name" value="TRANSCRIPTIONAL REGULATOR MRAZ"/>
    <property type="match status" value="1"/>
</dbReference>
<dbReference type="Pfam" id="PF02381">
    <property type="entry name" value="MraZ"/>
    <property type="match status" value="2"/>
</dbReference>
<dbReference type="SUPFAM" id="SSF89447">
    <property type="entry name" value="AbrB/MazE/MraZ-like"/>
    <property type="match status" value="1"/>
</dbReference>
<dbReference type="PROSITE" id="PS51740">
    <property type="entry name" value="SPOVT_ABRB"/>
    <property type="match status" value="2"/>
</dbReference>